<comment type="function">
    <text evidence="1">One of the primary rRNA binding proteins, it binds specifically to the 5'-end of 16S ribosomal RNA.</text>
</comment>
<comment type="subunit">
    <text evidence="1">Part of the 30S ribosomal subunit.</text>
</comment>
<comment type="similarity">
    <text evidence="1">Belongs to the universal ribosomal protein uS17 family.</text>
</comment>
<gene>
    <name evidence="1" type="primary">rpsQ</name>
    <name type="ordered locus">Pput_0496</name>
</gene>
<feature type="chain" id="PRO_1000055002" description="Small ribosomal subunit protein uS17">
    <location>
        <begin position="1"/>
        <end position="88"/>
    </location>
</feature>
<organism>
    <name type="scientific">Pseudomonas putida (strain ATCC 700007 / DSM 6899 / JCM 31910 / BCRC 17059 / LMG 24140 / F1)</name>
    <dbReference type="NCBI Taxonomy" id="351746"/>
    <lineage>
        <taxon>Bacteria</taxon>
        <taxon>Pseudomonadati</taxon>
        <taxon>Pseudomonadota</taxon>
        <taxon>Gammaproteobacteria</taxon>
        <taxon>Pseudomonadales</taxon>
        <taxon>Pseudomonadaceae</taxon>
        <taxon>Pseudomonas</taxon>
    </lineage>
</organism>
<evidence type="ECO:0000255" key="1">
    <source>
        <dbReference type="HAMAP-Rule" id="MF_01345"/>
    </source>
</evidence>
<evidence type="ECO:0000305" key="2"/>
<proteinExistence type="inferred from homology"/>
<sequence length="88" mass="10058">MAEAEKTVRTLTGRVVSDKMDKTITVLIERRVKHPIYGKYVKRSTKLHAHDEANQCKIGDKVSIRETRPLAKTKSWALVEVLERAVEV</sequence>
<keyword id="KW-0687">Ribonucleoprotein</keyword>
<keyword id="KW-0689">Ribosomal protein</keyword>
<keyword id="KW-0694">RNA-binding</keyword>
<keyword id="KW-0699">rRNA-binding</keyword>
<reference key="1">
    <citation type="submission" date="2007-05" db="EMBL/GenBank/DDBJ databases">
        <title>Complete sequence of Pseudomonas putida F1.</title>
        <authorList>
            <consortium name="US DOE Joint Genome Institute"/>
            <person name="Copeland A."/>
            <person name="Lucas S."/>
            <person name="Lapidus A."/>
            <person name="Barry K."/>
            <person name="Detter J.C."/>
            <person name="Glavina del Rio T."/>
            <person name="Hammon N."/>
            <person name="Israni S."/>
            <person name="Dalin E."/>
            <person name="Tice H."/>
            <person name="Pitluck S."/>
            <person name="Chain P."/>
            <person name="Malfatti S."/>
            <person name="Shin M."/>
            <person name="Vergez L."/>
            <person name="Schmutz J."/>
            <person name="Larimer F."/>
            <person name="Land M."/>
            <person name="Hauser L."/>
            <person name="Kyrpides N."/>
            <person name="Lykidis A."/>
            <person name="Parales R."/>
            <person name="Richardson P."/>
        </authorList>
    </citation>
    <scope>NUCLEOTIDE SEQUENCE [LARGE SCALE GENOMIC DNA]</scope>
    <source>
        <strain>ATCC 700007 / DSM 6899 / JCM 31910 / BCRC 17059 / LMG 24140 / F1</strain>
    </source>
</reference>
<dbReference type="EMBL" id="CP000712">
    <property type="protein sequence ID" value="ABQ76666.1"/>
    <property type="molecule type" value="Genomic_DNA"/>
</dbReference>
<dbReference type="SMR" id="A5VXQ6"/>
<dbReference type="KEGG" id="ppf:Pput_0496"/>
<dbReference type="eggNOG" id="COG0186">
    <property type="taxonomic scope" value="Bacteria"/>
</dbReference>
<dbReference type="HOGENOM" id="CLU_073626_1_1_6"/>
<dbReference type="GO" id="GO:0022627">
    <property type="term" value="C:cytosolic small ribosomal subunit"/>
    <property type="evidence" value="ECO:0007669"/>
    <property type="project" value="TreeGrafter"/>
</dbReference>
<dbReference type="GO" id="GO:0019843">
    <property type="term" value="F:rRNA binding"/>
    <property type="evidence" value="ECO:0007669"/>
    <property type="project" value="UniProtKB-UniRule"/>
</dbReference>
<dbReference type="GO" id="GO:0003735">
    <property type="term" value="F:structural constituent of ribosome"/>
    <property type="evidence" value="ECO:0007669"/>
    <property type="project" value="InterPro"/>
</dbReference>
<dbReference type="GO" id="GO:0006412">
    <property type="term" value="P:translation"/>
    <property type="evidence" value="ECO:0007669"/>
    <property type="project" value="UniProtKB-UniRule"/>
</dbReference>
<dbReference type="CDD" id="cd00364">
    <property type="entry name" value="Ribosomal_uS17"/>
    <property type="match status" value="1"/>
</dbReference>
<dbReference type="FunFam" id="2.40.50.140:FF:000014">
    <property type="entry name" value="30S ribosomal protein S17"/>
    <property type="match status" value="1"/>
</dbReference>
<dbReference type="Gene3D" id="2.40.50.140">
    <property type="entry name" value="Nucleic acid-binding proteins"/>
    <property type="match status" value="1"/>
</dbReference>
<dbReference type="HAMAP" id="MF_01345_B">
    <property type="entry name" value="Ribosomal_uS17_B"/>
    <property type="match status" value="1"/>
</dbReference>
<dbReference type="InterPro" id="IPR012340">
    <property type="entry name" value="NA-bd_OB-fold"/>
</dbReference>
<dbReference type="InterPro" id="IPR000266">
    <property type="entry name" value="Ribosomal_uS17"/>
</dbReference>
<dbReference type="InterPro" id="IPR019984">
    <property type="entry name" value="Ribosomal_uS17_bact/chlr"/>
</dbReference>
<dbReference type="NCBIfam" id="NF004123">
    <property type="entry name" value="PRK05610.1"/>
    <property type="match status" value="1"/>
</dbReference>
<dbReference type="NCBIfam" id="TIGR03635">
    <property type="entry name" value="uS17_bact"/>
    <property type="match status" value="1"/>
</dbReference>
<dbReference type="PANTHER" id="PTHR10744">
    <property type="entry name" value="40S RIBOSOMAL PROTEIN S11 FAMILY MEMBER"/>
    <property type="match status" value="1"/>
</dbReference>
<dbReference type="PANTHER" id="PTHR10744:SF1">
    <property type="entry name" value="SMALL RIBOSOMAL SUBUNIT PROTEIN US17M"/>
    <property type="match status" value="1"/>
</dbReference>
<dbReference type="Pfam" id="PF00366">
    <property type="entry name" value="Ribosomal_S17"/>
    <property type="match status" value="1"/>
</dbReference>
<dbReference type="PRINTS" id="PR00973">
    <property type="entry name" value="RIBOSOMALS17"/>
</dbReference>
<dbReference type="SUPFAM" id="SSF50249">
    <property type="entry name" value="Nucleic acid-binding proteins"/>
    <property type="match status" value="1"/>
</dbReference>
<name>RS17_PSEP1</name>
<protein>
    <recommendedName>
        <fullName evidence="1">Small ribosomal subunit protein uS17</fullName>
    </recommendedName>
    <alternativeName>
        <fullName evidence="2">30S ribosomal protein S17</fullName>
    </alternativeName>
</protein>
<accession>A5VXQ6</accession>